<reference key="1">
    <citation type="journal article" date="2009" name="BMC Genomics">
        <title>Metabolic analysis of the soil microbe Dechloromonas aromatica str. RCB: indications of a surprisingly complex life-style and cryptic anaerobic pathways for aromatic degradation.</title>
        <authorList>
            <person name="Salinero K.K."/>
            <person name="Keller K."/>
            <person name="Feil W.S."/>
            <person name="Feil H."/>
            <person name="Trong S."/>
            <person name="Di Bartolo G."/>
            <person name="Lapidus A."/>
        </authorList>
    </citation>
    <scope>NUCLEOTIDE SEQUENCE [LARGE SCALE GENOMIC DNA]</scope>
    <source>
        <strain>RCB</strain>
    </source>
</reference>
<protein>
    <recommendedName>
        <fullName evidence="1">Protoheme IX farnesyltransferase</fullName>
        <ecNumber evidence="1">2.5.1.141</ecNumber>
    </recommendedName>
    <alternativeName>
        <fullName evidence="1">Heme B farnesyltransferase</fullName>
    </alternativeName>
    <alternativeName>
        <fullName evidence="1">Heme O synthase</fullName>
    </alternativeName>
</protein>
<dbReference type="EC" id="2.5.1.141" evidence="1"/>
<dbReference type="EMBL" id="CP000089">
    <property type="protein sequence ID" value="AAZ46212.1"/>
    <property type="molecule type" value="Genomic_DNA"/>
</dbReference>
<dbReference type="SMR" id="Q47G19"/>
<dbReference type="STRING" id="159087.Daro_1463"/>
<dbReference type="KEGG" id="dar:Daro_1463"/>
<dbReference type="eggNOG" id="COG0109">
    <property type="taxonomic scope" value="Bacteria"/>
</dbReference>
<dbReference type="HOGENOM" id="CLU_029631_0_2_4"/>
<dbReference type="OrthoDB" id="9814417at2"/>
<dbReference type="UniPathway" id="UPA00834">
    <property type="reaction ID" value="UER00712"/>
</dbReference>
<dbReference type="GO" id="GO:0005886">
    <property type="term" value="C:plasma membrane"/>
    <property type="evidence" value="ECO:0007669"/>
    <property type="project" value="UniProtKB-SubCell"/>
</dbReference>
<dbReference type="GO" id="GO:0008495">
    <property type="term" value="F:protoheme IX farnesyltransferase activity"/>
    <property type="evidence" value="ECO:0007669"/>
    <property type="project" value="UniProtKB-UniRule"/>
</dbReference>
<dbReference type="GO" id="GO:0048034">
    <property type="term" value="P:heme O biosynthetic process"/>
    <property type="evidence" value="ECO:0007669"/>
    <property type="project" value="UniProtKB-UniRule"/>
</dbReference>
<dbReference type="CDD" id="cd13957">
    <property type="entry name" value="PT_UbiA_Cox10"/>
    <property type="match status" value="1"/>
</dbReference>
<dbReference type="Gene3D" id="1.10.357.140">
    <property type="entry name" value="UbiA prenyltransferase"/>
    <property type="match status" value="1"/>
</dbReference>
<dbReference type="HAMAP" id="MF_00154">
    <property type="entry name" value="CyoE_CtaB"/>
    <property type="match status" value="1"/>
</dbReference>
<dbReference type="InterPro" id="IPR006369">
    <property type="entry name" value="Protohaem_IX_farnesylTrfase"/>
</dbReference>
<dbReference type="InterPro" id="IPR000537">
    <property type="entry name" value="UbiA_prenyltransferase"/>
</dbReference>
<dbReference type="InterPro" id="IPR044878">
    <property type="entry name" value="UbiA_sf"/>
</dbReference>
<dbReference type="NCBIfam" id="TIGR01473">
    <property type="entry name" value="cyoE_ctaB"/>
    <property type="match status" value="1"/>
</dbReference>
<dbReference type="NCBIfam" id="NF003349">
    <property type="entry name" value="PRK04375.1-2"/>
    <property type="match status" value="1"/>
</dbReference>
<dbReference type="PANTHER" id="PTHR43448:SF7">
    <property type="entry name" value="4-HYDROXYBENZOATE SOLANESYLTRANSFERASE"/>
    <property type="match status" value="1"/>
</dbReference>
<dbReference type="PANTHER" id="PTHR43448">
    <property type="entry name" value="PROTOHEME IX FARNESYLTRANSFERASE, MITOCHONDRIAL"/>
    <property type="match status" value="1"/>
</dbReference>
<dbReference type="Pfam" id="PF01040">
    <property type="entry name" value="UbiA"/>
    <property type="match status" value="1"/>
</dbReference>
<proteinExistence type="inferred from homology"/>
<comment type="function">
    <text evidence="1">Converts heme B (protoheme IX) to heme O by substitution of the vinyl group on carbon 2 of heme B porphyrin ring with a hydroxyethyl farnesyl side group.</text>
</comment>
<comment type="catalytic activity">
    <reaction evidence="1">
        <text>heme b + (2E,6E)-farnesyl diphosphate + H2O = Fe(II)-heme o + diphosphate</text>
        <dbReference type="Rhea" id="RHEA:28070"/>
        <dbReference type="ChEBI" id="CHEBI:15377"/>
        <dbReference type="ChEBI" id="CHEBI:33019"/>
        <dbReference type="ChEBI" id="CHEBI:60344"/>
        <dbReference type="ChEBI" id="CHEBI:60530"/>
        <dbReference type="ChEBI" id="CHEBI:175763"/>
        <dbReference type="EC" id="2.5.1.141"/>
    </reaction>
</comment>
<comment type="pathway">
    <text evidence="1">Porphyrin-containing compound metabolism; heme O biosynthesis; heme O from protoheme: step 1/1.</text>
</comment>
<comment type="subcellular location">
    <subcellularLocation>
        <location evidence="1">Cell inner membrane</location>
        <topology evidence="1">Multi-pass membrane protein</topology>
    </subcellularLocation>
</comment>
<comment type="miscellaneous">
    <text evidence="1">Carbon 2 of the heme B porphyrin ring is defined according to the Fischer nomenclature.</text>
</comment>
<comment type="similarity">
    <text evidence="1">Belongs to the UbiA prenyltransferase family. Protoheme IX farnesyltransferase subfamily.</text>
</comment>
<feature type="chain" id="PRO_0000327045" description="Protoheme IX farnesyltransferase">
    <location>
        <begin position="1"/>
        <end position="298"/>
    </location>
</feature>
<feature type="transmembrane region" description="Helical" evidence="1">
    <location>
        <begin position="29"/>
        <end position="49"/>
    </location>
</feature>
<feature type="transmembrane region" description="Helical" evidence="1">
    <location>
        <begin position="51"/>
        <end position="71"/>
    </location>
</feature>
<feature type="transmembrane region" description="Helical" evidence="1">
    <location>
        <begin position="97"/>
        <end position="117"/>
    </location>
</feature>
<feature type="transmembrane region" description="Helical" evidence="1">
    <location>
        <begin position="120"/>
        <end position="140"/>
    </location>
</feature>
<feature type="transmembrane region" description="Helical" evidence="1">
    <location>
        <begin position="148"/>
        <end position="168"/>
    </location>
</feature>
<feature type="transmembrane region" description="Helical" evidence="1">
    <location>
        <begin position="175"/>
        <end position="195"/>
    </location>
</feature>
<feature type="transmembrane region" description="Helical" evidence="1">
    <location>
        <begin position="221"/>
        <end position="241"/>
    </location>
</feature>
<feature type="transmembrane region" description="Helical" evidence="1">
    <location>
        <begin position="243"/>
        <end position="263"/>
    </location>
</feature>
<feature type="transmembrane region" description="Helical" evidence="1">
    <location>
        <begin position="278"/>
        <end position="298"/>
    </location>
</feature>
<keyword id="KW-0997">Cell inner membrane</keyword>
<keyword id="KW-1003">Cell membrane</keyword>
<keyword id="KW-0350">Heme biosynthesis</keyword>
<keyword id="KW-0472">Membrane</keyword>
<keyword id="KW-0808">Transferase</keyword>
<keyword id="KW-0812">Transmembrane</keyword>
<keyword id="KW-1133">Transmembrane helix</keyword>
<gene>
    <name evidence="1" type="primary">ctaB</name>
    <name type="ordered locus">Daro_1463</name>
</gene>
<sequence>MQTIATPSLPLGQRLAAFSHLCKPRVNSLIVFTAMIGMCLATPDFPPLLRFGVASLGIALVSFAAAALNCLVERTVDAKMARTSWRATARGDISPLETVTLATALGAAGLWLLHGFINDLTMWLTLATFVGYTVIYTLILKPATPMNIVIGGASGAMPPLLGWTAMTGQVSAEPLVLFLIIFLWTPPHFWALACYRRDDYACSGLPMLPVTHGIAFTCQHILWYTLMLAAASLIPVSLGMSGGFYLIAIGLLDLVFLGYAIALCRRYSDALARRTFRYSILYLTLLFAALFADRLIVL</sequence>
<name>COXX_DECAR</name>
<evidence type="ECO:0000255" key="1">
    <source>
        <dbReference type="HAMAP-Rule" id="MF_00154"/>
    </source>
</evidence>
<accession>Q47G19</accession>
<organism>
    <name type="scientific">Dechloromonas aromatica (strain RCB)</name>
    <dbReference type="NCBI Taxonomy" id="159087"/>
    <lineage>
        <taxon>Bacteria</taxon>
        <taxon>Pseudomonadati</taxon>
        <taxon>Pseudomonadota</taxon>
        <taxon>Betaproteobacteria</taxon>
        <taxon>Rhodocyclales</taxon>
        <taxon>Azonexaceae</taxon>
        <taxon>Dechloromonas</taxon>
    </lineage>
</organism>